<protein>
    <recommendedName>
        <fullName evidence="1">Glutamate 5-kinase</fullName>
        <ecNumber evidence="1">2.7.2.11</ecNumber>
    </recommendedName>
    <alternativeName>
        <fullName evidence="1">Gamma-glutamyl kinase</fullName>
        <shortName evidence="1">GK</shortName>
    </alternativeName>
</protein>
<proteinExistence type="inferred from homology"/>
<name>PROB_SPHAL</name>
<evidence type="ECO:0000255" key="1">
    <source>
        <dbReference type="HAMAP-Rule" id="MF_00456"/>
    </source>
</evidence>
<accession>Q1GQZ4</accession>
<gene>
    <name evidence="1" type="primary">proB</name>
    <name type="ordered locus">Sala_2219</name>
</gene>
<comment type="function">
    <text evidence="1">Catalyzes the transfer of a phosphate group to glutamate to form L-glutamate 5-phosphate.</text>
</comment>
<comment type="catalytic activity">
    <reaction evidence="1">
        <text>L-glutamate + ATP = L-glutamyl 5-phosphate + ADP</text>
        <dbReference type="Rhea" id="RHEA:14877"/>
        <dbReference type="ChEBI" id="CHEBI:29985"/>
        <dbReference type="ChEBI" id="CHEBI:30616"/>
        <dbReference type="ChEBI" id="CHEBI:58274"/>
        <dbReference type="ChEBI" id="CHEBI:456216"/>
        <dbReference type="EC" id="2.7.2.11"/>
    </reaction>
</comment>
<comment type="pathway">
    <text evidence="1">Amino-acid biosynthesis; L-proline biosynthesis; L-glutamate 5-semialdehyde from L-glutamate: step 1/2.</text>
</comment>
<comment type="subcellular location">
    <subcellularLocation>
        <location evidence="1">Cytoplasm</location>
    </subcellularLocation>
</comment>
<comment type="similarity">
    <text evidence="1">Belongs to the glutamate 5-kinase family.</text>
</comment>
<dbReference type="EC" id="2.7.2.11" evidence="1"/>
<dbReference type="EMBL" id="CP000356">
    <property type="protein sequence ID" value="ABF53928.1"/>
    <property type="molecule type" value="Genomic_DNA"/>
</dbReference>
<dbReference type="RefSeq" id="WP_011542504.1">
    <property type="nucleotide sequence ID" value="NC_008048.1"/>
</dbReference>
<dbReference type="SMR" id="Q1GQZ4"/>
<dbReference type="STRING" id="317655.Sala_2219"/>
<dbReference type="KEGG" id="sal:Sala_2219"/>
<dbReference type="eggNOG" id="COG0263">
    <property type="taxonomic scope" value="Bacteria"/>
</dbReference>
<dbReference type="HOGENOM" id="CLU_025400_2_0_5"/>
<dbReference type="OrthoDB" id="9804434at2"/>
<dbReference type="UniPathway" id="UPA00098">
    <property type="reaction ID" value="UER00359"/>
</dbReference>
<dbReference type="Proteomes" id="UP000006578">
    <property type="component" value="Chromosome"/>
</dbReference>
<dbReference type="GO" id="GO:0005829">
    <property type="term" value="C:cytosol"/>
    <property type="evidence" value="ECO:0007669"/>
    <property type="project" value="TreeGrafter"/>
</dbReference>
<dbReference type="GO" id="GO:0005524">
    <property type="term" value="F:ATP binding"/>
    <property type="evidence" value="ECO:0007669"/>
    <property type="project" value="UniProtKB-KW"/>
</dbReference>
<dbReference type="GO" id="GO:0004349">
    <property type="term" value="F:glutamate 5-kinase activity"/>
    <property type="evidence" value="ECO:0007669"/>
    <property type="project" value="UniProtKB-UniRule"/>
</dbReference>
<dbReference type="GO" id="GO:0003723">
    <property type="term" value="F:RNA binding"/>
    <property type="evidence" value="ECO:0007669"/>
    <property type="project" value="InterPro"/>
</dbReference>
<dbReference type="GO" id="GO:0055129">
    <property type="term" value="P:L-proline biosynthetic process"/>
    <property type="evidence" value="ECO:0007669"/>
    <property type="project" value="UniProtKB-UniRule"/>
</dbReference>
<dbReference type="CDD" id="cd21157">
    <property type="entry name" value="PUA_G5K"/>
    <property type="match status" value="1"/>
</dbReference>
<dbReference type="FunFam" id="3.40.1160.10:FF:000006">
    <property type="entry name" value="Glutamate 5-kinase"/>
    <property type="match status" value="1"/>
</dbReference>
<dbReference type="Gene3D" id="3.40.1160.10">
    <property type="entry name" value="Acetylglutamate kinase-like"/>
    <property type="match status" value="1"/>
</dbReference>
<dbReference type="Gene3D" id="2.30.130.10">
    <property type="entry name" value="PUA domain"/>
    <property type="match status" value="1"/>
</dbReference>
<dbReference type="HAMAP" id="MF_00456">
    <property type="entry name" value="ProB"/>
    <property type="match status" value="1"/>
</dbReference>
<dbReference type="InterPro" id="IPR036393">
    <property type="entry name" value="AceGlu_kinase-like_sf"/>
</dbReference>
<dbReference type="InterPro" id="IPR001048">
    <property type="entry name" value="Asp/Glu/Uridylate_kinase"/>
</dbReference>
<dbReference type="InterPro" id="IPR001057">
    <property type="entry name" value="Glu/AcGlu_kinase"/>
</dbReference>
<dbReference type="InterPro" id="IPR011529">
    <property type="entry name" value="Glu_5kinase"/>
</dbReference>
<dbReference type="InterPro" id="IPR005715">
    <property type="entry name" value="Glu_5kinase/COase_Synthase"/>
</dbReference>
<dbReference type="InterPro" id="IPR019797">
    <property type="entry name" value="Glutamate_5-kinase_CS"/>
</dbReference>
<dbReference type="InterPro" id="IPR002478">
    <property type="entry name" value="PUA"/>
</dbReference>
<dbReference type="InterPro" id="IPR015947">
    <property type="entry name" value="PUA-like_sf"/>
</dbReference>
<dbReference type="InterPro" id="IPR036974">
    <property type="entry name" value="PUA_sf"/>
</dbReference>
<dbReference type="NCBIfam" id="TIGR01027">
    <property type="entry name" value="proB"/>
    <property type="match status" value="1"/>
</dbReference>
<dbReference type="PANTHER" id="PTHR43654">
    <property type="entry name" value="GLUTAMATE 5-KINASE"/>
    <property type="match status" value="1"/>
</dbReference>
<dbReference type="PANTHER" id="PTHR43654:SF1">
    <property type="entry name" value="ISOPENTENYL PHOSPHATE KINASE"/>
    <property type="match status" value="1"/>
</dbReference>
<dbReference type="Pfam" id="PF00696">
    <property type="entry name" value="AA_kinase"/>
    <property type="match status" value="1"/>
</dbReference>
<dbReference type="Pfam" id="PF01472">
    <property type="entry name" value="PUA"/>
    <property type="match status" value="1"/>
</dbReference>
<dbReference type="PIRSF" id="PIRSF000729">
    <property type="entry name" value="GK"/>
    <property type="match status" value="1"/>
</dbReference>
<dbReference type="PRINTS" id="PR00474">
    <property type="entry name" value="GLU5KINASE"/>
</dbReference>
<dbReference type="SMART" id="SM00359">
    <property type="entry name" value="PUA"/>
    <property type="match status" value="1"/>
</dbReference>
<dbReference type="SUPFAM" id="SSF53633">
    <property type="entry name" value="Carbamate kinase-like"/>
    <property type="match status" value="1"/>
</dbReference>
<dbReference type="SUPFAM" id="SSF88697">
    <property type="entry name" value="PUA domain-like"/>
    <property type="match status" value="1"/>
</dbReference>
<dbReference type="PROSITE" id="PS00902">
    <property type="entry name" value="GLUTAMATE_5_KINASE"/>
    <property type="match status" value="1"/>
</dbReference>
<dbReference type="PROSITE" id="PS50890">
    <property type="entry name" value="PUA"/>
    <property type="match status" value="1"/>
</dbReference>
<feature type="chain" id="PRO_0000253003" description="Glutamate 5-kinase">
    <location>
        <begin position="1"/>
        <end position="368"/>
    </location>
</feature>
<feature type="domain" description="PUA" evidence="1">
    <location>
        <begin position="277"/>
        <end position="354"/>
    </location>
</feature>
<feature type="binding site" evidence="1">
    <location>
        <position position="15"/>
    </location>
    <ligand>
        <name>ATP</name>
        <dbReference type="ChEBI" id="CHEBI:30616"/>
    </ligand>
</feature>
<feature type="binding site" evidence="1">
    <location>
        <position position="55"/>
    </location>
    <ligand>
        <name>substrate</name>
    </ligand>
</feature>
<feature type="binding site" evidence="1">
    <location>
        <position position="143"/>
    </location>
    <ligand>
        <name>substrate</name>
    </ligand>
</feature>
<feature type="binding site" evidence="1">
    <location>
        <position position="155"/>
    </location>
    <ligand>
        <name>substrate</name>
    </ligand>
</feature>
<feature type="binding site" evidence="1">
    <location>
        <begin position="175"/>
        <end position="176"/>
    </location>
    <ligand>
        <name>ATP</name>
        <dbReference type="ChEBI" id="CHEBI:30616"/>
    </ligand>
</feature>
<feature type="binding site" evidence="1">
    <location>
        <begin position="217"/>
        <end position="223"/>
    </location>
    <ligand>
        <name>ATP</name>
        <dbReference type="ChEBI" id="CHEBI:30616"/>
    </ligand>
</feature>
<organism>
    <name type="scientific">Sphingopyxis alaskensis (strain DSM 13593 / LMG 18877 / RB2256)</name>
    <name type="common">Sphingomonas alaskensis</name>
    <dbReference type="NCBI Taxonomy" id="317655"/>
    <lineage>
        <taxon>Bacteria</taxon>
        <taxon>Pseudomonadati</taxon>
        <taxon>Pseudomonadota</taxon>
        <taxon>Alphaproteobacteria</taxon>
        <taxon>Sphingomonadales</taxon>
        <taxon>Sphingomonadaceae</taxon>
        <taxon>Sphingopyxis</taxon>
    </lineage>
</organism>
<sequence length="368" mass="37406">MSLFPPASCPRLIVKIGSALLVDPGGAVRRDWLTGIAADIAERARAGQQVAVVSSGAIALGARRLGLAKGGRASLEDAQAAAATGQIALSQVWAEVLGAEGLTAAQMLVTLGDLEHRRRYLNAAATLDRLLSLGVVPIINENDSVATEEIRFGDNDRLAARVAQAAAARGVILLSDIDGLYDRNPAQPGAVHIERIERIDAAIEAMADTGSASGMGSGGMVSKIAAARIANAAGAHLAIASGRIDRPLSTAARHSLFVAERGASARKAWLAGGLTAEGRLTIDAGAVKALVGGASLLAAGVTAVSGSFARGDILDIVGPDGRVVARGLSEYPAADAAAIVGLGRDAQEAALGYAPRSAIVHRDHMVLL</sequence>
<keyword id="KW-0028">Amino-acid biosynthesis</keyword>
<keyword id="KW-0067">ATP-binding</keyword>
<keyword id="KW-0963">Cytoplasm</keyword>
<keyword id="KW-0418">Kinase</keyword>
<keyword id="KW-0547">Nucleotide-binding</keyword>
<keyword id="KW-0641">Proline biosynthesis</keyword>
<keyword id="KW-1185">Reference proteome</keyword>
<keyword id="KW-0808">Transferase</keyword>
<reference key="1">
    <citation type="journal article" date="2009" name="Proc. Natl. Acad. Sci. U.S.A.">
        <title>The genomic basis of trophic strategy in marine bacteria.</title>
        <authorList>
            <person name="Lauro F.M."/>
            <person name="McDougald D."/>
            <person name="Thomas T."/>
            <person name="Williams T.J."/>
            <person name="Egan S."/>
            <person name="Rice S."/>
            <person name="DeMaere M.Z."/>
            <person name="Ting L."/>
            <person name="Ertan H."/>
            <person name="Johnson J."/>
            <person name="Ferriera S."/>
            <person name="Lapidus A."/>
            <person name="Anderson I."/>
            <person name="Kyrpides N."/>
            <person name="Munk A.C."/>
            <person name="Detter C."/>
            <person name="Han C.S."/>
            <person name="Brown M.V."/>
            <person name="Robb F.T."/>
            <person name="Kjelleberg S."/>
            <person name="Cavicchioli R."/>
        </authorList>
    </citation>
    <scope>NUCLEOTIDE SEQUENCE [LARGE SCALE GENOMIC DNA]</scope>
    <source>
        <strain>DSM 13593 / LMG 18877 / RB2256</strain>
    </source>
</reference>